<gene>
    <name evidence="1" type="primary">tsaC</name>
    <name type="synonym">rimN</name>
    <name type="ordered locus">APL_1140</name>
</gene>
<evidence type="ECO:0000255" key="1">
    <source>
        <dbReference type="HAMAP-Rule" id="MF_01852"/>
    </source>
</evidence>
<proteinExistence type="inferred from homology"/>
<comment type="function">
    <text evidence="1">Required for the formation of a threonylcarbamoyl group on adenosine at position 37 (t(6)A37) in tRNAs that read codons beginning with adenine. Catalyzes the conversion of L-threonine, HCO(3)(-)/CO(2) and ATP to give threonylcarbamoyl-AMP (TC-AMP) as the acyladenylate intermediate, with the release of diphosphate.</text>
</comment>
<comment type="catalytic activity">
    <reaction evidence="1">
        <text>L-threonine + hydrogencarbonate + ATP = L-threonylcarbamoyladenylate + diphosphate + H2O</text>
        <dbReference type="Rhea" id="RHEA:36407"/>
        <dbReference type="ChEBI" id="CHEBI:15377"/>
        <dbReference type="ChEBI" id="CHEBI:17544"/>
        <dbReference type="ChEBI" id="CHEBI:30616"/>
        <dbReference type="ChEBI" id="CHEBI:33019"/>
        <dbReference type="ChEBI" id="CHEBI:57926"/>
        <dbReference type="ChEBI" id="CHEBI:73682"/>
        <dbReference type="EC" id="2.7.7.87"/>
    </reaction>
</comment>
<comment type="subcellular location">
    <subcellularLocation>
        <location evidence="1">Cytoplasm</location>
    </subcellularLocation>
</comment>
<comment type="similarity">
    <text evidence="1">Belongs to the SUA5 family. TsaC subfamily.</text>
</comment>
<dbReference type="EC" id="2.7.7.87" evidence="1"/>
<dbReference type="EMBL" id="CP000569">
    <property type="protein sequence ID" value="ABN74230.1"/>
    <property type="molecule type" value="Genomic_DNA"/>
</dbReference>
<dbReference type="RefSeq" id="WP_011848536.1">
    <property type="nucleotide sequence ID" value="NC_009053.1"/>
</dbReference>
<dbReference type="SMR" id="A3N1E4"/>
<dbReference type="STRING" id="416269.APL_1140"/>
<dbReference type="EnsemblBacteria" id="ABN74230">
    <property type="protein sequence ID" value="ABN74230"/>
    <property type="gene ID" value="APL_1140"/>
</dbReference>
<dbReference type="KEGG" id="apl:APL_1140"/>
<dbReference type="PATRIC" id="fig|416269.6.peg.1188"/>
<dbReference type="eggNOG" id="COG0009">
    <property type="taxonomic scope" value="Bacteria"/>
</dbReference>
<dbReference type="HOGENOM" id="CLU_031397_6_0_6"/>
<dbReference type="Proteomes" id="UP000001432">
    <property type="component" value="Chromosome"/>
</dbReference>
<dbReference type="GO" id="GO:0005737">
    <property type="term" value="C:cytoplasm"/>
    <property type="evidence" value="ECO:0007669"/>
    <property type="project" value="UniProtKB-SubCell"/>
</dbReference>
<dbReference type="GO" id="GO:0005524">
    <property type="term" value="F:ATP binding"/>
    <property type="evidence" value="ECO:0007669"/>
    <property type="project" value="UniProtKB-UniRule"/>
</dbReference>
<dbReference type="GO" id="GO:0003725">
    <property type="term" value="F:double-stranded RNA binding"/>
    <property type="evidence" value="ECO:0007669"/>
    <property type="project" value="InterPro"/>
</dbReference>
<dbReference type="GO" id="GO:0061710">
    <property type="term" value="F:L-threonylcarbamoyladenylate synthase"/>
    <property type="evidence" value="ECO:0007669"/>
    <property type="project" value="UniProtKB-EC"/>
</dbReference>
<dbReference type="GO" id="GO:0000049">
    <property type="term" value="F:tRNA binding"/>
    <property type="evidence" value="ECO:0007669"/>
    <property type="project" value="TreeGrafter"/>
</dbReference>
<dbReference type="GO" id="GO:0006450">
    <property type="term" value="P:regulation of translational fidelity"/>
    <property type="evidence" value="ECO:0007669"/>
    <property type="project" value="TreeGrafter"/>
</dbReference>
<dbReference type="GO" id="GO:0002949">
    <property type="term" value="P:tRNA threonylcarbamoyladenosine modification"/>
    <property type="evidence" value="ECO:0007669"/>
    <property type="project" value="UniProtKB-UniRule"/>
</dbReference>
<dbReference type="FunFam" id="3.90.870.10:FF:000004">
    <property type="entry name" value="Threonylcarbamoyl-AMP synthase"/>
    <property type="match status" value="1"/>
</dbReference>
<dbReference type="Gene3D" id="3.90.870.10">
    <property type="entry name" value="DHBP synthase"/>
    <property type="match status" value="1"/>
</dbReference>
<dbReference type="HAMAP" id="MF_01852">
    <property type="entry name" value="TsaC"/>
    <property type="match status" value="1"/>
</dbReference>
<dbReference type="InterPro" id="IPR017945">
    <property type="entry name" value="DHBP_synth_RibB-like_a/b_dom"/>
</dbReference>
<dbReference type="InterPro" id="IPR006070">
    <property type="entry name" value="Sua5-like_dom"/>
</dbReference>
<dbReference type="InterPro" id="IPR023535">
    <property type="entry name" value="TC-AMP_synthase"/>
</dbReference>
<dbReference type="InterPro" id="IPR050156">
    <property type="entry name" value="TC-AMP_synthase_SUA5"/>
</dbReference>
<dbReference type="PANTHER" id="PTHR17490">
    <property type="entry name" value="SUA5"/>
    <property type="match status" value="1"/>
</dbReference>
<dbReference type="PANTHER" id="PTHR17490:SF18">
    <property type="entry name" value="THREONYLCARBAMOYL-AMP SYNTHASE"/>
    <property type="match status" value="1"/>
</dbReference>
<dbReference type="Pfam" id="PF01300">
    <property type="entry name" value="Sua5_yciO_yrdC"/>
    <property type="match status" value="1"/>
</dbReference>
<dbReference type="SUPFAM" id="SSF55821">
    <property type="entry name" value="YrdC/RibB"/>
    <property type="match status" value="1"/>
</dbReference>
<dbReference type="PROSITE" id="PS51163">
    <property type="entry name" value="YRDC"/>
    <property type="match status" value="1"/>
</dbReference>
<accession>A3N1E4</accession>
<protein>
    <recommendedName>
        <fullName evidence="1">Threonylcarbamoyl-AMP synthase</fullName>
        <shortName evidence="1">TC-AMP synthase</shortName>
        <ecNumber evidence="1">2.7.7.87</ecNumber>
    </recommendedName>
    <alternativeName>
        <fullName evidence="1">L-threonylcarbamoyladenylate synthase</fullName>
    </alternativeName>
    <alternativeName>
        <fullName evidence="1">t(6)A37 threonylcarbamoyladenosine biosynthesis protein TsaC</fullName>
    </alternativeName>
    <alternativeName>
        <fullName evidence="1">tRNA threonylcarbamoyladenosine biosynthesis protein TsaC</fullName>
    </alternativeName>
</protein>
<reference key="1">
    <citation type="journal article" date="2008" name="J. Bacteriol.">
        <title>The complete genome sequence of Actinobacillus pleuropneumoniae L20 (serotype 5b).</title>
        <authorList>
            <person name="Foote S.J."/>
            <person name="Bosse J.T."/>
            <person name="Bouevitch A.B."/>
            <person name="Langford P.R."/>
            <person name="Young N.M."/>
            <person name="Nash J.H.E."/>
        </authorList>
    </citation>
    <scope>NUCLEOTIDE SEQUENCE [LARGE SCALE GENOMIC DNA]</scope>
    <source>
        <strain>L20</strain>
    </source>
</reference>
<keyword id="KW-0067">ATP-binding</keyword>
<keyword id="KW-0963">Cytoplasm</keyword>
<keyword id="KW-0547">Nucleotide-binding</keyword>
<keyword id="KW-0548">Nucleotidyltransferase</keyword>
<keyword id="KW-1185">Reference proteome</keyword>
<keyword id="KW-0808">Transferase</keyword>
<keyword id="KW-0819">tRNA processing</keyword>
<sequence length="184" mass="20555">MNNLENIVEQLKRNRVVAYPTEAVFGLGCNPNNESAVRALLKLKKRPEEKGLILIAPTKELLLPYIDENKLTAAHWQIFETPSERAITWVMPAKKAVPQYLTGQFDTIAVRLCCIPAVIDLCERTGFALTSTSCNLTGQEPCRTADEVKLQFGADFPVLEAETAGKTNPPEIRDIFTQHIFRQG</sequence>
<organism>
    <name type="scientific">Actinobacillus pleuropneumoniae serotype 5b (strain L20)</name>
    <dbReference type="NCBI Taxonomy" id="416269"/>
    <lineage>
        <taxon>Bacteria</taxon>
        <taxon>Pseudomonadati</taxon>
        <taxon>Pseudomonadota</taxon>
        <taxon>Gammaproteobacteria</taxon>
        <taxon>Pasteurellales</taxon>
        <taxon>Pasteurellaceae</taxon>
        <taxon>Actinobacillus</taxon>
    </lineage>
</organism>
<feature type="chain" id="PRO_0000352892" description="Threonylcarbamoyl-AMP synthase">
    <location>
        <begin position="1"/>
        <end position="184"/>
    </location>
</feature>
<feature type="domain" description="YrdC-like" evidence="1">
    <location>
        <begin position="1"/>
        <end position="184"/>
    </location>
</feature>
<name>TSAC_ACTP2</name>